<accession>B5QZ59</accession>
<feature type="chain" id="PRO_1000186683" description="4-hydroxybenzoate octaprenyltransferase">
    <location>
        <begin position="1"/>
        <end position="290"/>
    </location>
</feature>
<feature type="transmembrane region" description="Helical" evidence="1">
    <location>
        <begin position="23"/>
        <end position="43"/>
    </location>
</feature>
<feature type="transmembrane region" description="Helical" evidence="1">
    <location>
        <begin position="46"/>
        <end position="66"/>
    </location>
</feature>
<feature type="transmembrane region" description="Helical" evidence="1">
    <location>
        <begin position="99"/>
        <end position="119"/>
    </location>
</feature>
<feature type="transmembrane region" description="Helical" evidence="1">
    <location>
        <begin position="141"/>
        <end position="161"/>
    </location>
</feature>
<feature type="transmembrane region" description="Helical" evidence="1">
    <location>
        <begin position="163"/>
        <end position="183"/>
    </location>
</feature>
<feature type="transmembrane region" description="Helical" evidence="1">
    <location>
        <begin position="212"/>
        <end position="232"/>
    </location>
</feature>
<feature type="transmembrane region" description="Helical" evidence="1">
    <location>
        <begin position="233"/>
        <end position="253"/>
    </location>
</feature>
<feature type="transmembrane region" description="Helical" evidence="1">
    <location>
        <begin position="268"/>
        <end position="288"/>
    </location>
</feature>
<reference key="1">
    <citation type="journal article" date="2008" name="Genome Res.">
        <title>Comparative genome analysis of Salmonella enteritidis PT4 and Salmonella gallinarum 287/91 provides insights into evolutionary and host adaptation pathways.</title>
        <authorList>
            <person name="Thomson N.R."/>
            <person name="Clayton D.J."/>
            <person name="Windhorst D."/>
            <person name="Vernikos G."/>
            <person name="Davidson S."/>
            <person name="Churcher C."/>
            <person name="Quail M.A."/>
            <person name="Stevens M."/>
            <person name="Jones M.A."/>
            <person name="Watson M."/>
            <person name="Barron A."/>
            <person name="Layton A."/>
            <person name="Pickard D."/>
            <person name="Kingsley R.A."/>
            <person name="Bignell A."/>
            <person name="Clark L."/>
            <person name="Harris B."/>
            <person name="Ormond D."/>
            <person name="Abdellah Z."/>
            <person name="Brooks K."/>
            <person name="Cherevach I."/>
            <person name="Chillingworth T."/>
            <person name="Woodward J."/>
            <person name="Norberczak H."/>
            <person name="Lord A."/>
            <person name="Arrowsmith C."/>
            <person name="Jagels K."/>
            <person name="Moule S."/>
            <person name="Mungall K."/>
            <person name="Saunders M."/>
            <person name="Whitehead S."/>
            <person name="Chabalgoity J.A."/>
            <person name="Maskell D."/>
            <person name="Humphreys T."/>
            <person name="Roberts M."/>
            <person name="Barrow P.A."/>
            <person name="Dougan G."/>
            <person name="Parkhill J."/>
        </authorList>
    </citation>
    <scope>NUCLEOTIDE SEQUENCE [LARGE SCALE GENOMIC DNA]</scope>
    <source>
        <strain>P125109</strain>
    </source>
</reference>
<comment type="function">
    <text evidence="1">Catalyzes the prenylation of para-hydroxybenzoate (PHB) with an all-trans polyprenyl group. Mediates the second step in the final reaction sequence of ubiquinone-8 (UQ-8) biosynthesis, which is the condensation of the polyisoprenoid side chain with PHB, generating the first membrane-bound Q intermediate 3-octaprenyl-4-hydroxybenzoate.</text>
</comment>
<comment type="catalytic activity">
    <reaction evidence="1">
        <text>all-trans-octaprenyl diphosphate + 4-hydroxybenzoate = 4-hydroxy-3-(all-trans-octaprenyl)benzoate + diphosphate</text>
        <dbReference type="Rhea" id="RHEA:27782"/>
        <dbReference type="ChEBI" id="CHEBI:1617"/>
        <dbReference type="ChEBI" id="CHEBI:17879"/>
        <dbReference type="ChEBI" id="CHEBI:33019"/>
        <dbReference type="ChEBI" id="CHEBI:57711"/>
        <dbReference type="EC" id="2.5.1.39"/>
    </reaction>
</comment>
<comment type="cofactor">
    <cofactor evidence="1">
        <name>Mg(2+)</name>
        <dbReference type="ChEBI" id="CHEBI:18420"/>
    </cofactor>
</comment>
<comment type="pathway">
    <text evidence="1">Cofactor biosynthesis; ubiquinone biosynthesis.</text>
</comment>
<comment type="subcellular location">
    <subcellularLocation>
        <location evidence="1">Cell inner membrane</location>
        <topology evidence="1">Multi-pass membrane protein</topology>
    </subcellularLocation>
</comment>
<comment type="similarity">
    <text evidence="1">Belongs to the UbiA prenyltransferase family.</text>
</comment>
<sequence>MEWSLTQSKLLAFHRLMRTDKPIGALLLLWPTLWALWVATPGMPQLWILAVFVAGVWLMRAAGCVVNDYADRKFDGHVKRTVNRPLPSGAVTEKEARNLFVVLVLLAFLLVLTLNAMTILLSVAALALAWVYPFMKRYTHLPQVVLGAAFGWSIPMAFAAVSESLPLSCWLMFLANILWAVAYDTQYAMVDRDDDIKIGIKSTAILFGRYDTLIIGILQLGVMALMALIGWLNGLGWGYYWAVLVAGALFVYQQKLIANREREACFKAFMNNNYVGLVLFLGLAMSYWHF</sequence>
<evidence type="ECO:0000255" key="1">
    <source>
        <dbReference type="HAMAP-Rule" id="MF_01635"/>
    </source>
</evidence>
<gene>
    <name evidence="1" type="primary">ubiA</name>
    <name type="ordered locus">SEN4003</name>
</gene>
<organism>
    <name type="scientific">Salmonella enteritidis PT4 (strain P125109)</name>
    <dbReference type="NCBI Taxonomy" id="550537"/>
    <lineage>
        <taxon>Bacteria</taxon>
        <taxon>Pseudomonadati</taxon>
        <taxon>Pseudomonadota</taxon>
        <taxon>Gammaproteobacteria</taxon>
        <taxon>Enterobacterales</taxon>
        <taxon>Enterobacteriaceae</taxon>
        <taxon>Salmonella</taxon>
    </lineage>
</organism>
<protein>
    <recommendedName>
        <fullName evidence="1">4-hydroxybenzoate octaprenyltransferase</fullName>
        <ecNumber evidence="1">2.5.1.39</ecNumber>
    </recommendedName>
    <alternativeName>
        <fullName evidence="1">4-HB polyprenyltransferase</fullName>
    </alternativeName>
</protein>
<dbReference type="EC" id="2.5.1.39" evidence="1"/>
<dbReference type="EMBL" id="AM933172">
    <property type="protein sequence ID" value="CAR35567.1"/>
    <property type="molecule type" value="Genomic_DNA"/>
</dbReference>
<dbReference type="RefSeq" id="WP_000455249.1">
    <property type="nucleotide sequence ID" value="NC_011294.1"/>
</dbReference>
<dbReference type="SMR" id="B5QZ59"/>
<dbReference type="KEGG" id="set:SEN4003"/>
<dbReference type="HOGENOM" id="CLU_034879_1_0_6"/>
<dbReference type="UniPathway" id="UPA00232"/>
<dbReference type="Proteomes" id="UP000000613">
    <property type="component" value="Chromosome"/>
</dbReference>
<dbReference type="GO" id="GO:0005886">
    <property type="term" value="C:plasma membrane"/>
    <property type="evidence" value="ECO:0007669"/>
    <property type="project" value="UniProtKB-SubCell"/>
</dbReference>
<dbReference type="GO" id="GO:0008412">
    <property type="term" value="F:4-hydroxybenzoate polyprenyltransferase activity"/>
    <property type="evidence" value="ECO:0007669"/>
    <property type="project" value="UniProtKB-UniRule"/>
</dbReference>
<dbReference type="GO" id="GO:0006744">
    <property type="term" value="P:ubiquinone biosynthetic process"/>
    <property type="evidence" value="ECO:0007669"/>
    <property type="project" value="UniProtKB-UniRule"/>
</dbReference>
<dbReference type="CDD" id="cd13959">
    <property type="entry name" value="PT_UbiA_COQ2"/>
    <property type="match status" value="1"/>
</dbReference>
<dbReference type="FunFam" id="1.10.357.140:FF:000002">
    <property type="entry name" value="4-hydroxybenzoate octaprenyltransferase"/>
    <property type="match status" value="1"/>
</dbReference>
<dbReference type="FunFam" id="1.20.120.1780:FF:000001">
    <property type="entry name" value="4-hydroxybenzoate octaprenyltransferase"/>
    <property type="match status" value="1"/>
</dbReference>
<dbReference type="Gene3D" id="1.10.357.140">
    <property type="entry name" value="UbiA prenyltransferase"/>
    <property type="match status" value="1"/>
</dbReference>
<dbReference type="Gene3D" id="1.20.120.1780">
    <property type="entry name" value="UbiA prenyltransferase"/>
    <property type="match status" value="1"/>
</dbReference>
<dbReference type="HAMAP" id="MF_01635">
    <property type="entry name" value="UbiA"/>
    <property type="match status" value="1"/>
</dbReference>
<dbReference type="InterPro" id="IPR006370">
    <property type="entry name" value="HB_polyprenyltransferase-like"/>
</dbReference>
<dbReference type="InterPro" id="IPR039653">
    <property type="entry name" value="Prenyltransferase"/>
</dbReference>
<dbReference type="InterPro" id="IPR000537">
    <property type="entry name" value="UbiA_prenyltransferase"/>
</dbReference>
<dbReference type="InterPro" id="IPR030470">
    <property type="entry name" value="UbiA_prenylTrfase_CS"/>
</dbReference>
<dbReference type="InterPro" id="IPR044878">
    <property type="entry name" value="UbiA_sf"/>
</dbReference>
<dbReference type="NCBIfam" id="TIGR01474">
    <property type="entry name" value="ubiA_proteo"/>
    <property type="match status" value="1"/>
</dbReference>
<dbReference type="PANTHER" id="PTHR11048:SF28">
    <property type="entry name" value="4-HYDROXYBENZOATE POLYPRENYLTRANSFERASE, MITOCHONDRIAL"/>
    <property type="match status" value="1"/>
</dbReference>
<dbReference type="PANTHER" id="PTHR11048">
    <property type="entry name" value="PRENYLTRANSFERASES"/>
    <property type="match status" value="1"/>
</dbReference>
<dbReference type="Pfam" id="PF01040">
    <property type="entry name" value="UbiA"/>
    <property type="match status" value="1"/>
</dbReference>
<dbReference type="PROSITE" id="PS00943">
    <property type="entry name" value="UBIA"/>
    <property type="match status" value="1"/>
</dbReference>
<proteinExistence type="inferred from homology"/>
<keyword id="KW-0997">Cell inner membrane</keyword>
<keyword id="KW-1003">Cell membrane</keyword>
<keyword id="KW-0460">Magnesium</keyword>
<keyword id="KW-0472">Membrane</keyword>
<keyword id="KW-0808">Transferase</keyword>
<keyword id="KW-0812">Transmembrane</keyword>
<keyword id="KW-1133">Transmembrane helix</keyword>
<keyword id="KW-0831">Ubiquinone biosynthesis</keyword>
<name>UBIA_SALEP</name>